<name>RPOB_SOLM1</name>
<dbReference type="EC" id="2.7.7.6" evidence="1"/>
<dbReference type="EMBL" id="AP010904">
    <property type="protein sequence ID" value="BAH76607.1"/>
    <property type="molecule type" value="Genomic_DNA"/>
</dbReference>
<dbReference type="RefSeq" id="WP_015861765.1">
    <property type="nucleotide sequence ID" value="NC_012796.1"/>
</dbReference>
<dbReference type="SMR" id="C4XIN9"/>
<dbReference type="STRING" id="573370.DMR_31160"/>
<dbReference type="KEGG" id="dma:DMR_31160"/>
<dbReference type="eggNOG" id="COG0085">
    <property type="taxonomic scope" value="Bacteria"/>
</dbReference>
<dbReference type="HOGENOM" id="CLU_000524_4_0_7"/>
<dbReference type="OrthoDB" id="9803954at2"/>
<dbReference type="Proteomes" id="UP000009071">
    <property type="component" value="Chromosome"/>
</dbReference>
<dbReference type="GO" id="GO:0000428">
    <property type="term" value="C:DNA-directed RNA polymerase complex"/>
    <property type="evidence" value="ECO:0007669"/>
    <property type="project" value="UniProtKB-KW"/>
</dbReference>
<dbReference type="GO" id="GO:0003677">
    <property type="term" value="F:DNA binding"/>
    <property type="evidence" value="ECO:0007669"/>
    <property type="project" value="UniProtKB-UniRule"/>
</dbReference>
<dbReference type="GO" id="GO:0003899">
    <property type="term" value="F:DNA-directed RNA polymerase activity"/>
    <property type="evidence" value="ECO:0007669"/>
    <property type="project" value="UniProtKB-UniRule"/>
</dbReference>
<dbReference type="GO" id="GO:0032549">
    <property type="term" value="F:ribonucleoside binding"/>
    <property type="evidence" value="ECO:0007669"/>
    <property type="project" value="InterPro"/>
</dbReference>
<dbReference type="GO" id="GO:0006351">
    <property type="term" value="P:DNA-templated transcription"/>
    <property type="evidence" value="ECO:0007669"/>
    <property type="project" value="UniProtKB-UniRule"/>
</dbReference>
<dbReference type="CDD" id="cd00653">
    <property type="entry name" value="RNA_pol_B_RPB2"/>
    <property type="match status" value="1"/>
</dbReference>
<dbReference type="FunFam" id="3.90.1800.10:FF:000001">
    <property type="entry name" value="DNA-directed RNA polymerase subunit beta"/>
    <property type="match status" value="1"/>
</dbReference>
<dbReference type="Gene3D" id="2.40.50.100">
    <property type="match status" value="1"/>
</dbReference>
<dbReference type="Gene3D" id="2.40.50.150">
    <property type="match status" value="1"/>
</dbReference>
<dbReference type="Gene3D" id="3.90.1100.10">
    <property type="match status" value="2"/>
</dbReference>
<dbReference type="Gene3D" id="2.30.150.10">
    <property type="entry name" value="DNA-directed RNA polymerase, beta subunit, external 1 domain"/>
    <property type="match status" value="1"/>
</dbReference>
<dbReference type="Gene3D" id="2.40.270.10">
    <property type="entry name" value="DNA-directed RNA polymerase, subunit 2, domain 6"/>
    <property type="match status" value="1"/>
</dbReference>
<dbReference type="Gene3D" id="3.90.1800.10">
    <property type="entry name" value="RNA polymerase alpha subunit dimerisation domain"/>
    <property type="match status" value="1"/>
</dbReference>
<dbReference type="Gene3D" id="3.90.1110.10">
    <property type="entry name" value="RNA polymerase Rpb2, domain 2"/>
    <property type="match status" value="1"/>
</dbReference>
<dbReference type="HAMAP" id="MF_01321">
    <property type="entry name" value="RNApol_bact_RpoB"/>
    <property type="match status" value="1"/>
</dbReference>
<dbReference type="InterPro" id="IPR042107">
    <property type="entry name" value="DNA-dir_RNA_pol_bsu_ext_1_sf"/>
</dbReference>
<dbReference type="InterPro" id="IPR019462">
    <property type="entry name" value="DNA-dir_RNA_pol_bsu_external_1"/>
</dbReference>
<dbReference type="InterPro" id="IPR015712">
    <property type="entry name" value="DNA-dir_RNA_pol_su2"/>
</dbReference>
<dbReference type="InterPro" id="IPR007120">
    <property type="entry name" value="DNA-dir_RNAP_su2_dom"/>
</dbReference>
<dbReference type="InterPro" id="IPR037033">
    <property type="entry name" value="DNA-dir_RNAP_su2_hyb_sf"/>
</dbReference>
<dbReference type="InterPro" id="IPR010243">
    <property type="entry name" value="RNA_pol_bsu_bac"/>
</dbReference>
<dbReference type="InterPro" id="IPR007121">
    <property type="entry name" value="RNA_pol_bsu_CS"/>
</dbReference>
<dbReference type="InterPro" id="IPR007644">
    <property type="entry name" value="RNA_pol_bsu_protrusion"/>
</dbReference>
<dbReference type="InterPro" id="IPR007642">
    <property type="entry name" value="RNA_pol_Rpb2_2"/>
</dbReference>
<dbReference type="InterPro" id="IPR037034">
    <property type="entry name" value="RNA_pol_Rpb2_2_sf"/>
</dbReference>
<dbReference type="InterPro" id="IPR007645">
    <property type="entry name" value="RNA_pol_Rpb2_3"/>
</dbReference>
<dbReference type="InterPro" id="IPR007641">
    <property type="entry name" value="RNA_pol_Rpb2_7"/>
</dbReference>
<dbReference type="InterPro" id="IPR014724">
    <property type="entry name" value="RNA_pol_RPB2_OB-fold"/>
</dbReference>
<dbReference type="NCBIfam" id="NF001616">
    <property type="entry name" value="PRK00405.1"/>
    <property type="match status" value="1"/>
</dbReference>
<dbReference type="NCBIfam" id="TIGR02013">
    <property type="entry name" value="rpoB"/>
    <property type="match status" value="1"/>
</dbReference>
<dbReference type="PANTHER" id="PTHR20856">
    <property type="entry name" value="DNA-DIRECTED RNA POLYMERASE I SUBUNIT 2"/>
    <property type="match status" value="1"/>
</dbReference>
<dbReference type="Pfam" id="PF04563">
    <property type="entry name" value="RNA_pol_Rpb2_1"/>
    <property type="match status" value="1"/>
</dbReference>
<dbReference type="Pfam" id="PF04561">
    <property type="entry name" value="RNA_pol_Rpb2_2"/>
    <property type="match status" value="2"/>
</dbReference>
<dbReference type="Pfam" id="PF04565">
    <property type="entry name" value="RNA_pol_Rpb2_3"/>
    <property type="match status" value="1"/>
</dbReference>
<dbReference type="Pfam" id="PF10385">
    <property type="entry name" value="RNA_pol_Rpb2_45"/>
    <property type="match status" value="1"/>
</dbReference>
<dbReference type="Pfam" id="PF00562">
    <property type="entry name" value="RNA_pol_Rpb2_6"/>
    <property type="match status" value="1"/>
</dbReference>
<dbReference type="Pfam" id="PF04560">
    <property type="entry name" value="RNA_pol_Rpb2_7"/>
    <property type="match status" value="1"/>
</dbReference>
<dbReference type="SUPFAM" id="SSF64484">
    <property type="entry name" value="beta and beta-prime subunits of DNA dependent RNA-polymerase"/>
    <property type="match status" value="1"/>
</dbReference>
<dbReference type="PROSITE" id="PS01166">
    <property type="entry name" value="RNA_POL_BETA"/>
    <property type="match status" value="1"/>
</dbReference>
<protein>
    <recommendedName>
        <fullName evidence="1">DNA-directed RNA polymerase subunit beta</fullName>
        <shortName evidence="1">RNAP subunit beta</shortName>
        <ecNumber evidence="1">2.7.7.6</ecNumber>
    </recommendedName>
    <alternativeName>
        <fullName evidence="1">RNA polymerase subunit beta</fullName>
    </alternativeName>
    <alternativeName>
        <fullName evidence="1">Transcriptase subunit beta</fullName>
    </alternativeName>
</protein>
<reference key="1">
    <citation type="journal article" date="2009" name="Genome Res.">
        <title>Whole genome sequence of Desulfovibrio magneticus strain RS-1 revealed common gene clusters in magnetotactic bacteria.</title>
        <authorList>
            <person name="Nakazawa H."/>
            <person name="Arakaki A."/>
            <person name="Narita-Yamada S."/>
            <person name="Yashiro I."/>
            <person name="Jinno K."/>
            <person name="Aoki N."/>
            <person name="Tsuruyama A."/>
            <person name="Okamura Y."/>
            <person name="Tanikawa S."/>
            <person name="Fujita N."/>
            <person name="Takeyama H."/>
            <person name="Matsunaga T."/>
        </authorList>
    </citation>
    <scope>NUCLEOTIDE SEQUENCE [LARGE SCALE GENOMIC DNA]</scope>
    <source>
        <strain>ATCC 700980 / DSM 13731 / RS-1</strain>
    </source>
</reference>
<feature type="chain" id="PRO_1000214475" description="DNA-directed RNA polymerase subunit beta">
    <location>
        <begin position="1"/>
        <end position="1369"/>
    </location>
</feature>
<comment type="function">
    <text evidence="1">DNA-dependent RNA polymerase catalyzes the transcription of DNA into RNA using the four ribonucleoside triphosphates as substrates.</text>
</comment>
<comment type="catalytic activity">
    <reaction evidence="1">
        <text>RNA(n) + a ribonucleoside 5'-triphosphate = RNA(n+1) + diphosphate</text>
        <dbReference type="Rhea" id="RHEA:21248"/>
        <dbReference type="Rhea" id="RHEA-COMP:14527"/>
        <dbReference type="Rhea" id="RHEA-COMP:17342"/>
        <dbReference type="ChEBI" id="CHEBI:33019"/>
        <dbReference type="ChEBI" id="CHEBI:61557"/>
        <dbReference type="ChEBI" id="CHEBI:140395"/>
        <dbReference type="EC" id="2.7.7.6"/>
    </reaction>
</comment>
<comment type="subunit">
    <text evidence="1">The RNAP catalytic core consists of 2 alpha, 1 beta, 1 beta' and 1 omega subunit. When a sigma factor is associated with the core the holoenzyme is formed, which can initiate transcription.</text>
</comment>
<comment type="similarity">
    <text evidence="1">Belongs to the RNA polymerase beta chain family.</text>
</comment>
<keyword id="KW-0240">DNA-directed RNA polymerase</keyword>
<keyword id="KW-0548">Nucleotidyltransferase</keyword>
<keyword id="KW-0804">Transcription</keyword>
<keyword id="KW-0808">Transferase</keyword>
<accession>C4XIN9</accession>
<evidence type="ECO:0000255" key="1">
    <source>
        <dbReference type="HAMAP-Rule" id="MF_01321"/>
    </source>
</evidence>
<sequence>MAQLTKNFGKIVKTLTIPHLLNLQIDSYELFLQKDIPPTSREDAGLEGVFRSVFPIEDFNRTASLEYVSYEIGEPKYDVPECIAKGLTFEAPLRIKVRLVVYDVDEETENRTIRDIKEQIIYFGTVPLMTEKGTFIINGTERVIVNQLQRSPGIIFEHDSGKSHTSRKVLYSCRIIPMRGSWLDFDYDHKDILYVRIDRRRKMPATILFKAMGMSRADILRYFYEVEHFTFEPHHVFRQVLPDFYRKEKAYSEIRDSEGKVIVAVDKPITKRAWRLMLEAGIEKVEVDPATLLGLFLAEDLADPATGEVMAEAGDELNADLIEKLKDAGIVELSLLHTRGVDTSSSIRDTLALDKTIDTITAQVEIYRRLRPSSPPTPEIAANFFENLFRNPDYYDLSPVGRYKINARLKVDQPLDFRTLANDDILKAVKHLTFLKDSHGPADDIDHLGNRRVRPVGELVENQYRIGLVRMERAIKERMSLQEVATLMPHDLINPKPVAAVLKEFFGTSQLSQFMDQTNPLSEVTHKRRLSALGPGGLTRERAGFEVRDVHTSHYGRICPIETPEGPNIGLIVSLTTHSKVNDFGFIETPYKVVKDGQLTGETIYLDATREIDEVIAGANAPLDENKAFINSMVGARIRGDQVVIPREQVTLMDISPSQIVSVSAALIPFLEHDDANRALMGSNMQRQAVPLLRCEQPLVGTGMEGAVAKDSGSCILAEGEGFVHYADAERIIVCYDDPAVGTDTGSAKTYELLKHHKSNQNTCFGQVPRVLVGQRVVKGDVLADGPGIRDGELALGKNLLVAFMPWCGYNYEDSILISENAVKDDTFTSVHIEEFEVVARDTKLGPEEITRDIPNVGEEMLKDLDDCGIIRIGARVAPDDILVGKITPKGETQLTPEEKLLRAIFGDKARDVKNTSLKVPPGIEGTVIDVRVFNRRSGEKDDRTRQIEDFELARLDTKEGQHAAAIAANVRRRLWPVVSGKTVFQTIKGVKKGEVLLEANHPMTQEVLEALPVKKLSGLFTSKETNEAVAEVLDEYDRHIQFIKGLYDQKREKTTEGDDLPPGVIKMVKVYVAVKRKLNVGDKMAGRHGNKGVVSCILPIEDMPFFSHGRPVDIVLNPLGVPSRMNIGQILETHLGWAGMELGRQLAEMVDSGKAMEGVRDRAKAVFDTEETTALIDGMSDDDLRDALRALKNGIVAKTPVFDGATEDELWSWLKLAGLPEDGKVTLYDGRTGEAFHRPVTVGCMYILKLHHLVDEKIHARSTGPYSLVTQQPLGGKAQFGGQRLGEMEVWALEAYGASYLLQEFLTVKSDDVGGRVKMYEKIVKGDNFLEAGLPESFNVLVKELMSLGLDVDLIQDEKKIAKAPPRR</sequence>
<proteinExistence type="inferred from homology"/>
<organism>
    <name type="scientific">Solidesulfovibrio magneticus (strain ATCC 700980 / DSM 13731 / RS-1)</name>
    <name type="common">Desulfovibrio magneticus</name>
    <dbReference type="NCBI Taxonomy" id="573370"/>
    <lineage>
        <taxon>Bacteria</taxon>
        <taxon>Pseudomonadati</taxon>
        <taxon>Thermodesulfobacteriota</taxon>
        <taxon>Desulfovibrionia</taxon>
        <taxon>Desulfovibrionales</taxon>
        <taxon>Desulfovibrionaceae</taxon>
        <taxon>Solidesulfovibrio</taxon>
    </lineage>
</organism>
<gene>
    <name evidence="1" type="primary">rpoB</name>
    <name type="ordered locus">DMR_31160</name>
</gene>